<evidence type="ECO:0000250" key="1">
    <source>
        <dbReference type="UniProtKB" id="Q9DAN9"/>
    </source>
</evidence>
<evidence type="ECO:0000255" key="2"/>
<evidence type="ECO:0000269" key="3">
    <source>
    </source>
</evidence>
<evidence type="ECO:0000305" key="4"/>
<evidence type="ECO:0000312" key="5">
    <source>
        <dbReference type="HGNC" id="HGNC:37241"/>
    </source>
</evidence>
<dbReference type="EMBL" id="AC003098">
    <property type="status" value="NOT_ANNOTATED_CDS"/>
    <property type="molecule type" value="Genomic_DNA"/>
</dbReference>
<dbReference type="EMBL" id="BC146971">
    <property type="protein sequence ID" value="AAI46972.1"/>
    <property type="molecule type" value="mRNA"/>
</dbReference>
<dbReference type="CCDS" id="CCDS45695.1"/>
<dbReference type="RefSeq" id="NP_001129955.1">
    <property type="nucleotide sequence ID" value="NM_001136483.3"/>
</dbReference>
<dbReference type="RefSeq" id="XP_011522935.1">
    <property type="nucleotide sequence ID" value="XM_011524633.1"/>
</dbReference>
<dbReference type="SMR" id="B2RV13"/>
<dbReference type="BioGRID" id="129747">
    <property type="interactions" value="9"/>
</dbReference>
<dbReference type="FunCoup" id="B2RV13">
    <property type="interactions" value="5"/>
</dbReference>
<dbReference type="IntAct" id="B2RV13">
    <property type="interactions" value="6"/>
</dbReference>
<dbReference type="STRING" id="9606.ENSP00000415662"/>
<dbReference type="iPTMnet" id="B2RV13"/>
<dbReference type="PhosphoSitePlus" id="B2RV13"/>
<dbReference type="BioMuta" id="C17orf105"/>
<dbReference type="MassIVE" id="B2RV13"/>
<dbReference type="PaxDb" id="9606-ENSP00000415662"/>
<dbReference type="PeptideAtlas" id="B2RV13"/>
<dbReference type="ProteomicsDB" id="3459"/>
<dbReference type="Antibodypedia" id="29596">
    <property type="antibodies" value="16 antibodies from 9 providers"/>
</dbReference>
<dbReference type="DNASU" id="284067"/>
<dbReference type="Ensembl" id="ENST00000449302.8">
    <property type="protein sequence ID" value="ENSP00000415662.2"/>
    <property type="gene ID" value="ENSG00000231256.8"/>
</dbReference>
<dbReference type="GeneID" id="284067"/>
<dbReference type="KEGG" id="hsa:284067"/>
<dbReference type="MANE-Select" id="ENST00000449302.8">
    <property type="protein sequence ID" value="ENSP00000415662.2"/>
    <property type="RefSeq nucleotide sequence ID" value="NM_001136483.3"/>
    <property type="RefSeq protein sequence ID" value="NP_001129955.1"/>
</dbReference>
<dbReference type="UCSC" id="uc002ieg.4">
    <property type="organism name" value="human"/>
</dbReference>
<dbReference type="AGR" id="HGNC:37241"/>
<dbReference type="CTD" id="284067"/>
<dbReference type="DisGeNET" id="284067"/>
<dbReference type="GeneCards" id="CFAP97D1"/>
<dbReference type="HGNC" id="HGNC:37241">
    <property type="gene designation" value="CFAP97D1"/>
</dbReference>
<dbReference type="HPA" id="ENSG00000231256">
    <property type="expression patterns" value="Tissue enriched (testis)"/>
</dbReference>
<dbReference type="MIM" id="619866">
    <property type="type" value="gene"/>
</dbReference>
<dbReference type="neXtProt" id="NX_B2RV13"/>
<dbReference type="OpenTargets" id="ENSG00000231256"/>
<dbReference type="PharmGKB" id="PA165431514"/>
<dbReference type="VEuPathDB" id="HostDB:ENSG00000231256"/>
<dbReference type="eggNOG" id="ENOG502S44E">
    <property type="taxonomic scope" value="Eukaryota"/>
</dbReference>
<dbReference type="GeneTree" id="ENSGT00390000018148"/>
<dbReference type="HOGENOM" id="CLU_097298_2_0_1"/>
<dbReference type="InParanoid" id="B2RV13"/>
<dbReference type="OMA" id="DHVQWEE"/>
<dbReference type="OrthoDB" id="2163395at2759"/>
<dbReference type="PAN-GO" id="B2RV13">
    <property type="GO annotations" value="1 GO annotation based on evolutionary models"/>
</dbReference>
<dbReference type="PhylomeDB" id="B2RV13"/>
<dbReference type="TreeFam" id="TF325279"/>
<dbReference type="PathwayCommons" id="B2RV13"/>
<dbReference type="SignaLink" id="B2RV13"/>
<dbReference type="BioGRID-ORCS" id="284067">
    <property type="hits" value="21 hits in 1111 CRISPR screens"/>
</dbReference>
<dbReference type="GenomeRNAi" id="284067"/>
<dbReference type="Pharos" id="B2RV13">
    <property type="development level" value="Tdark"/>
</dbReference>
<dbReference type="PRO" id="PR:B2RV13"/>
<dbReference type="Proteomes" id="UP000005640">
    <property type="component" value="Chromosome 17"/>
</dbReference>
<dbReference type="RNAct" id="B2RV13">
    <property type="molecule type" value="protein"/>
</dbReference>
<dbReference type="Bgee" id="ENSG00000231256">
    <property type="expression patterns" value="Expressed in sperm and 41 other cell types or tissues"/>
</dbReference>
<dbReference type="ExpressionAtlas" id="B2RV13">
    <property type="expression patterns" value="baseline and differential"/>
</dbReference>
<dbReference type="GO" id="GO:0007288">
    <property type="term" value="P:sperm axoneme assembly"/>
    <property type="evidence" value="ECO:0000250"/>
    <property type="project" value="UniProtKB"/>
</dbReference>
<dbReference type="InterPro" id="IPR038792">
    <property type="entry name" value="CFAP97D1/2"/>
</dbReference>
<dbReference type="InterPro" id="IPR029488">
    <property type="entry name" value="Hmw/CFAP97"/>
</dbReference>
<dbReference type="PANTHER" id="PTHR33768">
    <property type="entry name" value="MIP11318P"/>
    <property type="match status" value="1"/>
</dbReference>
<dbReference type="PANTHER" id="PTHR33768:SF5">
    <property type="entry name" value="SPERM AXONEMAL MAINTENANCE PROTEIN CFAP97D1"/>
    <property type="match status" value="1"/>
</dbReference>
<dbReference type="Pfam" id="PF13879">
    <property type="entry name" value="Hmw_CFAP97"/>
    <property type="match status" value="1"/>
</dbReference>
<protein>
    <recommendedName>
        <fullName evidence="4">Sperm axonemal maintenance protein CFAP97D1</fullName>
    </recommendedName>
    <alternativeName>
        <fullName>CFAP97 domain-containing protein 1</fullName>
    </alternativeName>
</protein>
<sequence>MNNSLDYLAYPVIVSNHRQSTTFRKKLDFGHYVSHKNRIQIAKPTVDTKPPVAHTNHILKLSKLQGEQKKINKIEYENKQLCQKIANAHRGPAKVDCWNEYFSKSLNRETRNRELVRITMENQGILKRLVDRKPHYDRRASEIDWQNSRRYIRNTTRYLLSQNE</sequence>
<comment type="function">
    <text evidence="1">Required for male fertility through its role in axonemal doublet stabilization which is essential for sperm motility and fertilization.</text>
</comment>
<comment type="interaction">
    <interactant intactId="EBI-12870048">
        <id>B2RV13</id>
    </interactant>
    <interactant intactId="EBI-765407">
        <id>P41182</id>
        <label>BCL6</label>
    </interactant>
    <organismsDiffer>false</organismsDiffer>
    <experiments>3</experiments>
</comment>
<comment type="tissue specificity">
    <text evidence="3">Expressed exclusively in testis.</text>
</comment>
<comment type="similarity">
    <text evidence="4">Belongs to the CFAP97 family.</text>
</comment>
<organism>
    <name type="scientific">Homo sapiens</name>
    <name type="common">Human</name>
    <dbReference type="NCBI Taxonomy" id="9606"/>
    <lineage>
        <taxon>Eukaryota</taxon>
        <taxon>Metazoa</taxon>
        <taxon>Chordata</taxon>
        <taxon>Craniata</taxon>
        <taxon>Vertebrata</taxon>
        <taxon>Euteleostomi</taxon>
        <taxon>Mammalia</taxon>
        <taxon>Eutheria</taxon>
        <taxon>Euarchontoglires</taxon>
        <taxon>Primates</taxon>
        <taxon>Haplorrhini</taxon>
        <taxon>Catarrhini</taxon>
        <taxon>Hominidae</taxon>
        <taxon>Homo</taxon>
    </lineage>
</organism>
<proteinExistence type="evidence at protein level"/>
<reference key="1">
    <citation type="journal article" date="2006" name="Nature">
        <title>DNA sequence of human chromosome 17 and analysis of rearrangement in the human lineage.</title>
        <authorList>
            <person name="Zody M.C."/>
            <person name="Garber M."/>
            <person name="Adams D.J."/>
            <person name="Sharpe T."/>
            <person name="Harrow J."/>
            <person name="Lupski J.R."/>
            <person name="Nicholson C."/>
            <person name="Searle S.M."/>
            <person name="Wilming L."/>
            <person name="Young S.K."/>
            <person name="Abouelleil A."/>
            <person name="Allen N.R."/>
            <person name="Bi W."/>
            <person name="Bloom T."/>
            <person name="Borowsky M.L."/>
            <person name="Bugalter B.E."/>
            <person name="Butler J."/>
            <person name="Chang J.L."/>
            <person name="Chen C.-K."/>
            <person name="Cook A."/>
            <person name="Corum B."/>
            <person name="Cuomo C.A."/>
            <person name="de Jong P.J."/>
            <person name="DeCaprio D."/>
            <person name="Dewar K."/>
            <person name="FitzGerald M."/>
            <person name="Gilbert J."/>
            <person name="Gibson R."/>
            <person name="Gnerre S."/>
            <person name="Goldstein S."/>
            <person name="Grafham D.V."/>
            <person name="Grocock R."/>
            <person name="Hafez N."/>
            <person name="Hagopian D.S."/>
            <person name="Hart E."/>
            <person name="Norman C.H."/>
            <person name="Humphray S."/>
            <person name="Jaffe D.B."/>
            <person name="Jones M."/>
            <person name="Kamal M."/>
            <person name="Khodiyar V.K."/>
            <person name="LaButti K."/>
            <person name="Laird G."/>
            <person name="Lehoczky J."/>
            <person name="Liu X."/>
            <person name="Lokyitsang T."/>
            <person name="Loveland J."/>
            <person name="Lui A."/>
            <person name="Macdonald P."/>
            <person name="Major J.E."/>
            <person name="Matthews L."/>
            <person name="Mauceli E."/>
            <person name="McCarroll S.A."/>
            <person name="Mihalev A.H."/>
            <person name="Mudge J."/>
            <person name="Nguyen C."/>
            <person name="Nicol R."/>
            <person name="O'Leary S.B."/>
            <person name="Osoegawa K."/>
            <person name="Schwartz D.C."/>
            <person name="Shaw-Smith C."/>
            <person name="Stankiewicz P."/>
            <person name="Steward C."/>
            <person name="Swarbreck D."/>
            <person name="Venkataraman V."/>
            <person name="Whittaker C.A."/>
            <person name="Yang X."/>
            <person name="Zimmer A.R."/>
            <person name="Bradley A."/>
            <person name="Hubbard T."/>
            <person name="Birren B.W."/>
            <person name="Rogers J."/>
            <person name="Lander E.S."/>
            <person name="Nusbaum C."/>
        </authorList>
    </citation>
    <scope>NUCLEOTIDE SEQUENCE [LARGE SCALE GENOMIC DNA]</scope>
</reference>
<reference key="2">
    <citation type="journal article" date="2004" name="Genome Res.">
        <title>The status, quality, and expansion of the NIH full-length cDNA project: the Mammalian Gene Collection (MGC).</title>
        <authorList>
            <consortium name="The MGC Project Team"/>
        </authorList>
    </citation>
    <scope>NUCLEOTIDE SEQUENCE [LARGE SCALE MRNA]</scope>
</reference>
<reference key="3">
    <citation type="journal article" date="2020" name="PLoS Genet.">
        <title>Cfap97d1 is important for flagellar axoneme maintenance and male mouse fertility.</title>
        <authorList>
            <person name="Oura S."/>
            <person name="Kazi S."/>
            <person name="Savolainen A."/>
            <person name="Nozawa K."/>
            <person name="Castaneda J."/>
            <person name="Yu Z."/>
            <person name="Miyata H."/>
            <person name="Matzuk R.M."/>
            <person name="Hansen J.N."/>
            <person name="Wachten D."/>
            <person name="Matzuk M.M."/>
            <person name="Prunskaite-Hyyrylaeinen R."/>
        </authorList>
    </citation>
    <scope>TISSUE SPECIFICITY</scope>
</reference>
<accession>B2RV13</accession>
<name>CF97D_HUMAN</name>
<gene>
    <name evidence="5" type="primary">CFAP97D1</name>
    <name type="synonym">C17orf105</name>
</gene>
<keyword id="KW-0175">Coiled coil</keyword>
<keyword id="KW-1267">Proteomics identification</keyword>
<keyword id="KW-1185">Reference proteome</keyword>
<feature type="chain" id="PRO_0000392549" description="Sperm axonemal maintenance protein CFAP97D1">
    <location>
        <begin position="1"/>
        <end position="164"/>
    </location>
</feature>
<feature type="coiled-coil region" evidence="2">
    <location>
        <begin position="61"/>
        <end position="90"/>
    </location>
</feature>